<sequence>MKKASIITYGCQMNVNESAKIKKIFQNLGYDVTEEIDNADAVFLNTCTVREGAATQIFGKLGELKALKEKRGTIIGVTGCFAQEQGEELVKKFPIIDIVMGNQNIGRIPQAIEKIENNESTHEVYTDNEDELPPRLDAEFGSDQTASISITYGCNNFCTFCIVPYVRGRERSVPLEEIVKDVEQYVKKGAKEIVLLGQNVNSYGKDFKNGDNFAKLLDEICKVEGDYIVRFVSPHPRDFTDDVIEVIAKNKKISKCLHLPLQSGSSQILKKMRRGYTKEKYLALVDKIKSKIPGVALTADIIVGFPGETEEDFLDTIDVVQKVSFDNSYMFMYSIRKGTKAATMDNQIEESVKKERLQRLMEVQNKCSFYESSKYKGRIVKVLVEGPSKKNKEVLSGRTSTNKIVLFRGNLALKGQFINVKINECKTWTLYGEIV</sequence>
<comment type="function">
    <text evidence="1">Catalyzes the methylthiolation of N6-(dimethylallyl)adenosine (i(6)A), leading to the formation of 2-methylthio-N6-(dimethylallyl)adenosine (ms(2)i(6)A) at position 37 in tRNAs that read codons beginning with uridine.</text>
</comment>
<comment type="catalytic activity">
    <reaction evidence="1">
        <text>N(6)-dimethylallyladenosine(37) in tRNA + (sulfur carrier)-SH + AH2 + 2 S-adenosyl-L-methionine = 2-methylsulfanyl-N(6)-dimethylallyladenosine(37) in tRNA + (sulfur carrier)-H + 5'-deoxyadenosine + L-methionine + A + S-adenosyl-L-homocysteine + 2 H(+)</text>
        <dbReference type="Rhea" id="RHEA:37067"/>
        <dbReference type="Rhea" id="RHEA-COMP:10375"/>
        <dbReference type="Rhea" id="RHEA-COMP:10376"/>
        <dbReference type="Rhea" id="RHEA-COMP:14737"/>
        <dbReference type="Rhea" id="RHEA-COMP:14739"/>
        <dbReference type="ChEBI" id="CHEBI:13193"/>
        <dbReference type="ChEBI" id="CHEBI:15378"/>
        <dbReference type="ChEBI" id="CHEBI:17319"/>
        <dbReference type="ChEBI" id="CHEBI:17499"/>
        <dbReference type="ChEBI" id="CHEBI:29917"/>
        <dbReference type="ChEBI" id="CHEBI:57844"/>
        <dbReference type="ChEBI" id="CHEBI:57856"/>
        <dbReference type="ChEBI" id="CHEBI:59789"/>
        <dbReference type="ChEBI" id="CHEBI:64428"/>
        <dbReference type="ChEBI" id="CHEBI:74415"/>
        <dbReference type="ChEBI" id="CHEBI:74417"/>
        <dbReference type="EC" id="2.8.4.3"/>
    </reaction>
</comment>
<comment type="cofactor">
    <cofactor evidence="1">
        <name>[4Fe-4S] cluster</name>
        <dbReference type="ChEBI" id="CHEBI:49883"/>
    </cofactor>
    <text evidence="1">Binds 2 [4Fe-4S] clusters. One cluster is coordinated with 3 cysteines and an exchangeable S-adenosyl-L-methionine.</text>
</comment>
<comment type="subunit">
    <text evidence="1">Monomer.</text>
</comment>
<comment type="subcellular location">
    <subcellularLocation>
        <location evidence="1">Cytoplasm</location>
    </subcellularLocation>
</comment>
<comment type="similarity">
    <text evidence="1">Belongs to the methylthiotransferase family. MiaB subfamily.</text>
</comment>
<reference key="1">
    <citation type="journal article" date="2002" name="J. Bacteriol.">
        <title>Genome sequence and analysis of the oral bacterium Fusobacterium nucleatum strain ATCC 25586.</title>
        <authorList>
            <person name="Kapatral V."/>
            <person name="Anderson I."/>
            <person name="Ivanova N."/>
            <person name="Reznik G."/>
            <person name="Los T."/>
            <person name="Lykidis A."/>
            <person name="Bhattacharyya A."/>
            <person name="Bartman A."/>
            <person name="Gardner W."/>
            <person name="Grechkin G."/>
            <person name="Zhu L."/>
            <person name="Vasieva O."/>
            <person name="Chu L."/>
            <person name="Kogan Y."/>
            <person name="Chaga O."/>
            <person name="Goltsman E."/>
            <person name="Bernal A."/>
            <person name="Larsen N."/>
            <person name="D'Souza M."/>
            <person name="Walunas T."/>
            <person name="Pusch G."/>
            <person name="Haselkorn R."/>
            <person name="Fonstein M."/>
            <person name="Kyrpides N.C."/>
            <person name="Overbeek R."/>
        </authorList>
    </citation>
    <scope>NUCLEOTIDE SEQUENCE [LARGE SCALE GENOMIC DNA]</scope>
    <source>
        <strain>ATCC 25586 / DSM 15643 / BCRC 10681 / CIP 101130 / JCM 8532 / KCTC 2640 / LMG 13131 / VPI 4355</strain>
    </source>
</reference>
<name>MIAB_FUSNN</name>
<accession>Q8RG43</accession>
<organism>
    <name type="scientific">Fusobacterium nucleatum subsp. nucleatum (strain ATCC 25586 / DSM 15643 / BCRC 10681 / CIP 101130 / JCM 8532 / KCTC 2640 / LMG 13131 / VPI 4355)</name>
    <dbReference type="NCBI Taxonomy" id="190304"/>
    <lineage>
        <taxon>Bacteria</taxon>
        <taxon>Fusobacteriati</taxon>
        <taxon>Fusobacteriota</taxon>
        <taxon>Fusobacteriia</taxon>
        <taxon>Fusobacteriales</taxon>
        <taxon>Fusobacteriaceae</taxon>
        <taxon>Fusobacterium</taxon>
    </lineage>
</organism>
<proteinExistence type="inferred from homology"/>
<evidence type="ECO:0000255" key="1">
    <source>
        <dbReference type="HAMAP-Rule" id="MF_01864"/>
    </source>
</evidence>
<evidence type="ECO:0000255" key="2">
    <source>
        <dbReference type="PROSITE-ProRule" id="PRU01266"/>
    </source>
</evidence>
<dbReference type="EC" id="2.8.4.3" evidence="1"/>
<dbReference type="EMBL" id="AE009951">
    <property type="protein sequence ID" value="AAL94671.1"/>
    <property type="molecule type" value="Genomic_DNA"/>
</dbReference>
<dbReference type="RefSeq" id="NP_603372.1">
    <property type="nucleotide sequence ID" value="NC_003454.1"/>
</dbReference>
<dbReference type="RefSeq" id="WP_011016418.1">
    <property type="nucleotide sequence ID" value="NZ_CP028101.1"/>
</dbReference>
<dbReference type="SMR" id="Q8RG43"/>
<dbReference type="FunCoup" id="Q8RG43">
    <property type="interactions" value="372"/>
</dbReference>
<dbReference type="STRING" id="190304.FN0475"/>
<dbReference type="PaxDb" id="190304-FN0475"/>
<dbReference type="EnsemblBacteria" id="AAL94671">
    <property type="protein sequence ID" value="AAL94671"/>
    <property type="gene ID" value="FN0475"/>
</dbReference>
<dbReference type="GeneID" id="79783483"/>
<dbReference type="KEGG" id="fnu:FN0475"/>
<dbReference type="PATRIC" id="fig|190304.8.peg.1045"/>
<dbReference type="eggNOG" id="COG0621">
    <property type="taxonomic scope" value="Bacteria"/>
</dbReference>
<dbReference type="HOGENOM" id="CLU_018697_2_0_0"/>
<dbReference type="InParanoid" id="Q8RG43"/>
<dbReference type="BioCyc" id="FNUC190304:G1FZS-1068-MONOMER"/>
<dbReference type="Proteomes" id="UP000002521">
    <property type="component" value="Chromosome"/>
</dbReference>
<dbReference type="GO" id="GO:0005829">
    <property type="term" value="C:cytosol"/>
    <property type="evidence" value="ECO:0000318"/>
    <property type="project" value="GO_Central"/>
</dbReference>
<dbReference type="GO" id="GO:0051539">
    <property type="term" value="F:4 iron, 4 sulfur cluster binding"/>
    <property type="evidence" value="ECO:0000318"/>
    <property type="project" value="GO_Central"/>
</dbReference>
<dbReference type="GO" id="GO:0046872">
    <property type="term" value="F:metal ion binding"/>
    <property type="evidence" value="ECO:0007669"/>
    <property type="project" value="UniProtKB-KW"/>
</dbReference>
<dbReference type="GO" id="GO:0035597">
    <property type="term" value="F:N6-isopentenyladenosine methylthiotransferase activity"/>
    <property type="evidence" value="ECO:0000318"/>
    <property type="project" value="GO_Central"/>
</dbReference>
<dbReference type="GO" id="GO:0035600">
    <property type="term" value="P:tRNA methylthiolation"/>
    <property type="evidence" value="ECO:0000318"/>
    <property type="project" value="GO_Central"/>
</dbReference>
<dbReference type="CDD" id="cd01335">
    <property type="entry name" value="Radical_SAM"/>
    <property type="match status" value="1"/>
</dbReference>
<dbReference type="FunFam" id="3.40.50.12160:FF:000003">
    <property type="entry name" value="CDK5 regulatory subunit-associated protein 1"/>
    <property type="match status" value="1"/>
</dbReference>
<dbReference type="FunFam" id="3.80.30.20:FF:000001">
    <property type="entry name" value="tRNA-2-methylthio-N(6)-dimethylallyladenosine synthase 2"/>
    <property type="match status" value="1"/>
</dbReference>
<dbReference type="Gene3D" id="3.40.50.12160">
    <property type="entry name" value="Methylthiotransferase, N-terminal domain"/>
    <property type="match status" value="1"/>
</dbReference>
<dbReference type="Gene3D" id="3.80.30.20">
    <property type="entry name" value="tm_1862 like domain"/>
    <property type="match status" value="1"/>
</dbReference>
<dbReference type="HAMAP" id="MF_01864">
    <property type="entry name" value="tRNA_metthiotr_MiaB"/>
    <property type="match status" value="1"/>
</dbReference>
<dbReference type="InterPro" id="IPR006638">
    <property type="entry name" value="Elp3/MiaA/NifB-like_rSAM"/>
</dbReference>
<dbReference type="InterPro" id="IPR005839">
    <property type="entry name" value="Methylthiotransferase"/>
</dbReference>
<dbReference type="InterPro" id="IPR020612">
    <property type="entry name" value="Methylthiotransferase_CS"/>
</dbReference>
<dbReference type="InterPro" id="IPR013848">
    <property type="entry name" value="Methylthiotransferase_N"/>
</dbReference>
<dbReference type="InterPro" id="IPR038135">
    <property type="entry name" value="Methylthiotransferase_N_sf"/>
</dbReference>
<dbReference type="InterPro" id="IPR006463">
    <property type="entry name" value="MiaB_methiolase"/>
</dbReference>
<dbReference type="InterPro" id="IPR007197">
    <property type="entry name" value="rSAM"/>
</dbReference>
<dbReference type="InterPro" id="IPR023404">
    <property type="entry name" value="rSAM_horseshoe"/>
</dbReference>
<dbReference type="InterPro" id="IPR002792">
    <property type="entry name" value="TRAM_dom"/>
</dbReference>
<dbReference type="NCBIfam" id="TIGR01574">
    <property type="entry name" value="miaB-methiolase"/>
    <property type="match status" value="1"/>
</dbReference>
<dbReference type="NCBIfam" id="TIGR00089">
    <property type="entry name" value="MiaB/RimO family radical SAM methylthiotransferase"/>
    <property type="match status" value="1"/>
</dbReference>
<dbReference type="PANTHER" id="PTHR43020">
    <property type="entry name" value="CDK5 REGULATORY SUBUNIT-ASSOCIATED PROTEIN 1"/>
    <property type="match status" value="1"/>
</dbReference>
<dbReference type="PANTHER" id="PTHR43020:SF2">
    <property type="entry name" value="MITOCHONDRIAL TRNA METHYLTHIOTRANSFERASE CDK5RAP1"/>
    <property type="match status" value="1"/>
</dbReference>
<dbReference type="Pfam" id="PF04055">
    <property type="entry name" value="Radical_SAM"/>
    <property type="match status" value="1"/>
</dbReference>
<dbReference type="Pfam" id="PF01938">
    <property type="entry name" value="TRAM"/>
    <property type="match status" value="1"/>
</dbReference>
<dbReference type="Pfam" id="PF00919">
    <property type="entry name" value="UPF0004"/>
    <property type="match status" value="1"/>
</dbReference>
<dbReference type="SFLD" id="SFLDF00273">
    <property type="entry name" value="(dimethylallyl)adenosine_tRNA"/>
    <property type="match status" value="1"/>
</dbReference>
<dbReference type="SFLD" id="SFLDG01082">
    <property type="entry name" value="B12-binding_domain_containing"/>
    <property type="match status" value="1"/>
</dbReference>
<dbReference type="SFLD" id="SFLDG01061">
    <property type="entry name" value="methylthiotransferase"/>
    <property type="match status" value="1"/>
</dbReference>
<dbReference type="SMART" id="SM00729">
    <property type="entry name" value="Elp3"/>
    <property type="match status" value="1"/>
</dbReference>
<dbReference type="SUPFAM" id="SSF102114">
    <property type="entry name" value="Radical SAM enzymes"/>
    <property type="match status" value="1"/>
</dbReference>
<dbReference type="PROSITE" id="PS51449">
    <property type="entry name" value="MTTASE_N"/>
    <property type="match status" value="1"/>
</dbReference>
<dbReference type="PROSITE" id="PS01278">
    <property type="entry name" value="MTTASE_RADICAL"/>
    <property type="match status" value="1"/>
</dbReference>
<dbReference type="PROSITE" id="PS51918">
    <property type="entry name" value="RADICAL_SAM"/>
    <property type="match status" value="1"/>
</dbReference>
<dbReference type="PROSITE" id="PS50926">
    <property type="entry name" value="TRAM"/>
    <property type="match status" value="1"/>
</dbReference>
<feature type="chain" id="PRO_0000374314" description="tRNA-2-methylthio-N(6)-dimethylallyladenosine synthase">
    <location>
        <begin position="1"/>
        <end position="435"/>
    </location>
</feature>
<feature type="domain" description="MTTase N-terminal" evidence="1">
    <location>
        <begin position="2"/>
        <end position="117"/>
    </location>
</feature>
<feature type="domain" description="Radical SAM core" evidence="2">
    <location>
        <begin position="140"/>
        <end position="370"/>
    </location>
</feature>
<feature type="domain" description="TRAM" evidence="1">
    <location>
        <begin position="373"/>
        <end position="435"/>
    </location>
</feature>
<feature type="binding site" evidence="1">
    <location>
        <position position="11"/>
    </location>
    <ligand>
        <name>[4Fe-4S] cluster</name>
        <dbReference type="ChEBI" id="CHEBI:49883"/>
        <label>1</label>
    </ligand>
</feature>
<feature type="binding site" evidence="1">
    <location>
        <position position="47"/>
    </location>
    <ligand>
        <name>[4Fe-4S] cluster</name>
        <dbReference type="ChEBI" id="CHEBI:49883"/>
        <label>1</label>
    </ligand>
</feature>
<feature type="binding site" evidence="1">
    <location>
        <position position="80"/>
    </location>
    <ligand>
        <name>[4Fe-4S] cluster</name>
        <dbReference type="ChEBI" id="CHEBI:49883"/>
        <label>1</label>
    </ligand>
</feature>
<feature type="binding site" evidence="1">
    <location>
        <position position="154"/>
    </location>
    <ligand>
        <name>[4Fe-4S] cluster</name>
        <dbReference type="ChEBI" id="CHEBI:49883"/>
        <label>2</label>
        <note>4Fe-4S-S-AdoMet</note>
    </ligand>
</feature>
<feature type="binding site" evidence="1">
    <location>
        <position position="158"/>
    </location>
    <ligand>
        <name>[4Fe-4S] cluster</name>
        <dbReference type="ChEBI" id="CHEBI:49883"/>
        <label>2</label>
        <note>4Fe-4S-S-AdoMet</note>
    </ligand>
</feature>
<feature type="binding site" evidence="1">
    <location>
        <position position="161"/>
    </location>
    <ligand>
        <name>[4Fe-4S] cluster</name>
        <dbReference type="ChEBI" id="CHEBI:49883"/>
        <label>2</label>
        <note>4Fe-4S-S-AdoMet</note>
    </ligand>
</feature>
<protein>
    <recommendedName>
        <fullName evidence="1">tRNA-2-methylthio-N(6)-dimethylallyladenosine synthase</fullName>
        <ecNumber evidence="1">2.8.4.3</ecNumber>
    </recommendedName>
    <alternativeName>
        <fullName evidence="1">(Dimethylallyl)adenosine tRNA methylthiotransferase MiaB</fullName>
    </alternativeName>
    <alternativeName>
        <fullName evidence="1">tRNA-i(6)A37 methylthiotransferase</fullName>
    </alternativeName>
</protein>
<keyword id="KW-0004">4Fe-4S</keyword>
<keyword id="KW-0963">Cytoplasm</keyword>
<keyword id="KW-0408">Iron</keyword>
<keyword id="KW-0411">Iron-sulfur</keyword>
<keyword id="KW-0479">Metal-binding</keyword>
<keyword id="KW-1185">Reference proteome</keyword>
<keyword id="KW-0949">S-adenosyl-L-methionine</keyword>
<keyword id="KW-0808">Transferase</keyword>
<keyword id="KW-0819">tRNA processing</keyword>
<gene>
    <name evidence="1" type="primary">miaB</name>
    <name type="ordered locus">FN0475</name>
</gene>